<protein>
    <recommendedName>
        <fullName evidence="1">Ribosomal RNA small subunit methyltransferase H</fullName>
        <ecNumber evidence="1">2.1.1.199</ecNumber>
    </recommendedName>
    <alternativeName>
        <fullName evidence="1">16S rRNA m(4)C1402 methyltransferase</fullName>
    </alternativeName>
    <alternativeName>
        <fullName evidence="1">rRNA (cytosine-N(4)-)-methyltransferase RsmH</fullName>
    </alternativeName>
</protein>
<gene>
    <name evidence="1" type="primary">rsmH</name>
    <name type="synonym">mraW</name>
    <name type="ordered locus">HD_0239</name>
</gene>
<comment type="function">
    <text evidence="1">Specifically methylates the N4 position of cytidine in position 1402 (C1402) of 16S rRNA.</text>
</comment>
<comment type="catalytic activity">
    <reaction evidence="1">
        <text>cytidine(1402) in 16S rRNA + S-adenosyl-L-methionine = N(4)-methylcytidine(1402) in 16S rRNA + S-adenosyl-L-homocysteine + H(+)</text>
        <dbReference type="Rhea" id="RHEA:42928"/>
        <dbReference type="Rhea" id="RHEA-COMP:10286"/>
        <dbReference type="Rhea" id="RHEA-COMP:10287"/>
        <dbReference type="ChEBI" id="CHEBI:15378"/>
        <dbReference type="ChEBI" id="CHEBI:57856"/>
        <dbReference type="ChEBI" id="CHEBI:59789"/>
        <dbReference type="ChEBI" id="CHEBI:74506"/>
        <dbReference type="ChEBI" id="CHEBI:82748"/>
        <dbReference type="EC" id="2.1.1.199"/>
    </reaction>
</comment>
<comment type="subcellular location">
    <subcellularLocation>
        <location evidence="1">Cytoplasm</location>
    </subcellularLocation>
</comment>
<comment type="similarity">
    <text evidence="1">Belongs to the methyltransferase superfamily. RsmH family.</text>
</comment>
<accession>Q7VP62</accession>
<keyword id="KW-0963">Cytoplasm</keyword>
<keyword id="KW-0489">Methyltransferase</keyword>
<keyword id="KW-1185">Reference proteome</keyword>
<keyword id="KW-0698">rRNA processing</keyword>
<keyword id="KW-0949">S-adenosyl-L-methionine</keyword>
<keyword id="KW-0808">Transferase</keyword>
<sequence length="313" mass="34566">MNETDHKHITVLLHEAVDGLAIKPNGIYIDGTFGRGGHSRLILSRLATNGRLIAIDRDPCAIAEANTISDARFQIIHTAFSAIPEVCESLGLMGKIDGILLDLGVSSPQLDDAERGFSFMRDGPLDMRMDTTKGLSAAEWLAQVSIEDLAWVLKTFGEERFAKRIAQAVVSYNKTNSEKITRTLQLAKIIADAVPFKDKHKHPATRSFQAIRIFINRELDELEKALTNALRVLAPEGRLSIISFHSLEDRMVKQFMKKNSKGEVVPKGLPILEAELNKNIPLNIIGKAIMPSEAEIVANARSRSAVLRIAAKR</sequence>
<reference key="1">
    <citation type="submission" date="2003-06" db="EMBL/GenBank/DDBJ databases">
        <title>The complete genome sequence of Haemophilus ducreyi.</title>
        <authorList>
            <person name="Munson R.S. Jr."/>
            <person name="Ray W.C."/>
            <person name="Mahairas G."/>
            <person name="Sabo P."/>
            <person name="Mungur R."/>
            <person name="Johnson L."/>
            <person name="Nguyen D."/>
            <person name="Wang J."/>
            <person name="Forst C."/>
            <person name="Hood L."/>
        </authorList>
    </citation>
    <scope>NUCLEOTIDE SEQUENCE [LARGE SCALE GENOMIC DNA]</scope>
    <source>
        <strain>35000HP / ATCC 700724</strain>
    </source>
</reference>
<organism>
    <name type="scientific">Haemophilus ducreyi (strain 35000HP / ATCC 700724)</name>
    <dbReference type="NCBI Taxonomy" id="233412"/>
    <lineage>
        <taxon>Bacteria</taxon>
        <taxon>Pseudomonadati</taxon>
        <taxon>Pseudomonadota</taxon>
        <taxon>Gammaproteobacteria</taxon>
        <taxon>Pasteurellales</taxon>
        <taxon>Pasteurellaceae</taxon>
        <taxon>Haemophilus</taxon>
    </lineage>
</organism>
<proteinExistence type="inferred from homology"/>
<feature type="chain" id="PRO_0000108634" description="Ribosomal RNA small subunit methyltransferase H">
    <location>
        <begin position="1"/>
        <end position="313"/>
    </location>
</feature>
<feature type="binding site" evidence="1">
    <location>
        <begin position="36"/>
        <end position="38"/>
    </location>
    <ligand>
        <name>S-adenosyl-L-methionine</name>
        <dbReference type="ChEBI" id="CHEBI:59789"/>
    </ligand>
</feature>
<feature type="binding site" evidence="1">
    <location>
        <position position="56"/>
    </location>
    <ligand>
        <name>S-adenosyl-L-methionine</name>
        <dbReference type="ChEBI" id="CHEBI:59789"/>
    </ligand>
</feature>
<feature type="binding site" evidence="1">
    <location>
        <position position="80"/>
    </location>
    <ligand>
        <name>S-adenosyl-L-methionine</name>
        <dbReference type="ChEBI" id="CHEBI:59789"/>
    </ligand>
</feature>
<feature type="binding site" evidence="1">
    <location>
        <position position="102"/>
    </location>
    <ligand>
        <name>S-adenosyl-L-methionine</name>
        <dbReference type="ChEBI" id="CHEBI:59789"/>
    </ligand>
</feature>
<feature type="binding site" evidence="1">
    <location>
        <position position="109"/>
    </location>
    <ligand>
        <name>S-adenosyl-L-methionine</name>
        <dbReference type="ChEBI" id="CHEBI:59789"/>
    </ligand>
</feature>
<evidence type="ECO:0000255" key="1">
    <source>
        <dbReference type="HAMAP-Rule" id="MF_01007"/>
    </source>
</evidence>
<name>RSMH_HAEDU</name>
<dbReference type="EC" id="2.1.1.199" evidence="1"/>
<dbReference type="EMBL" id="AE017143">
    <property type="protein sequence ID" value="AAP95225.1"/>
    <property type="molecule type" value="Genomic_DNA"/>
</dbReference>
<dbReference type="RefSeq" id="WP_010944278.1">
    <property type="nucleotide sequence ID" value="NC_002940.2"/>
</dbReference>
<dbReference type="SMR" id="Q7VP62"/>
<dbReference type="STRING" id="233412.HD_0239"/>
<dbReference type="KEGG" id="hdu:HD_0239"/>
<dbReference type="eggNOG" id="COG0275">
    <property type="taxonomic scope" value="Bacteria"/>
</dbReference>
<dbReference type="HOGENOM" id="CLU_038422_2_0_6"/>
<dbReference type="OrthoDB" id="9806637at2"/>
<dbReference type="Proteomes" id="UP000001022">
    <property type="component" value="Chromosome"/>
</dbReference>
<dbReference type="GO" id="GO:0005737">
    <property type="term" value="C:cytoplasm"/>
    <property type="evidence" value="ECO:0007669"/>
    <property type="project" value="UniProtKB-SubCell"/>
</dbReference>
<dbReference type="GO" id="GO:0071424">
    <property type="term" value="F:rRNA (cytosine-N4-)-methyltransferase activity"/>
    <property type="evidence" value="ECO:0007669"/>
    <property type="project" value="UniProtKB-UniRule"/>
</dbReference>
<dbReference type="GO" id="GO:0070475">
    <property type="term" value="P:rRNA base methylation"/>
    <property type="evidence" value="ECO:0007669"/>
    <property type="project" value="UniProtKB-UniRule"/>
</dbReference>
<dbReference type="FunFam" id="1.10.150.170:FF:000001">
    <property type="entry name" value="Ribosomal RNA small subunit methyltransferase H"/>
    <property type="match status" value="1"/>
</dbReference>
<dbReference type="Gene3D" id="1.10.150.170">
    <property type="entry name" value="Putative methyltransferase TM0872, insert domain"/>
    <property type="match status" value="1"/>
</dbReference>
<dbReference type="Gene3D" id="3.40.50.150">
    <property type="entry name" value="Vaccinia Virus protein VP39"/>
    <property type="match status" value="1"/>
</dbReference>
<dbReference type="HAMAP" id="MF_01007">
    <property type="entry name" value="16SrRNA_methyltr_H"/>
    <property type="match status" value="1"/>
</dbReference>
<dbReference type="InterPro" id="IPR002903">
    <property type="entry name" value="RsmH"/>
</dbReference>
<dbReference type="InterPro" id="IPR023397">
    <property type="entry name" value="SAM-dep_MeTrfase_MraW_recog"/>
</dbReference>
<dbReference type="InterPro" id="IPR029063">
    <property type="entry name" value="SAM-dependent_MTases_sf"/>
</dbReference>
<dbReference type="NCBIfam" id="TIGR00006">
    <property type="entry name" value="16S rRNA (cytosine(1402)-N(4))-methyltransferase RsmH"/>
    <property type="match status" value="1"/>
</dbReference>
<dbReference type="PANTHER" id="PTHR11265:SF0">
    <property type="entry name" value="12S RRNA N4-METHYLCYTIDINE METHYLTRANSFERASE"/>
    <property type="match status" value="1"/>
</dbReference>
<dbReference type="PANTHER" id="PTHR11265">
    <property type="entry name" value="S-ADENOSYL-METHYLTRANSFERASE MRAW"/>
    <property type="match status" value="1"/>
</dbReference>
<dbReference type="Pfam" id="PF01795">
    <property type="entry name" value="Methyltransf_5"/>
    <property type="match status" value="1"/>
</dbReference>
<dbReference type="PIRSF" id="PIRSF004486">
    <property type="entry name" value="MraW"/>
    <property type="match status" value="1"/>
</dbReference>
<dbReference type="SUPFAM" id="SSF81799">
    <property type="entry name" value="Putative methyltransferase TM0872, insert domain"/>
    <property type="match status" value="1"/>
</dbReference>
<dbReference type="SUPFAM" id="SSF53335">
    <property type="entry name" value="S-adenosyl-L-methionine-dependent methyltransferases"/>
    <property type="match status" value="1"/>
</dbReference>